<proteinExistence type="inferred from homology"/>
<name>GLYCO_IHNVO</name>
<organismHost>
    <name type="scientific">Salmo</name>
    <dbReference type="NCBI Taxonomy" id="8028"/>
</organismHost>
<accession>Q82706</accession>
<dbReference type="EMBL" id="X89213">
    <property type="protein sequence ID" value="CAA61498.1"/>
    <property type="molecule type" value="Genomic_RNA"/>
</dbReference>
<dbReference type="SMR" id="Q82706"/>
<dbReference type="GlyCosmos" id="Q82706">
    <property type="glycosylation" value="4 sites, No reported glycans"/>
</dbReference>
<dbReference type="Proteomes" id="UP000007211">
    <property type="component" value="Genome"/>
</dbReference>
<dbReference type="GO" id="GO:0016020">
    <property type="term" value="C:membrane"/>
    <property type="evidence" value="ECO:0007669"/>
    <property type="project" value="UniProtKB-KW"/>
</dbReference>
<dbReference type="GO" id="GO:0019031">
    <property type="term" value="C:viral envelope"/>
    <property type="evidence" value="ECO:0007669"/>
    <property type="project" value="UniProtKB-KW"/>
</dbReference>
<dbReference type="GO" id="GO:0055036">
    <property type="term" value="C:virion membrane"/>
    <property type="evidence" value="ECO:0007669"/>
    <property type="project" value="UniProtKB-SubCell"/>
</dbReference>
<dbReference type="GO" id="GO:0046718">
    <property type="term" value="P:symbiont entry into host cell"/>
    <property type="evidence" value="ECO:0007669"/>
    <property type="project" value="UniProtKB-KW"/>
</dbReference>
<dbReference type="GO" id="GO:0019062">
    <property type="term" value="P:virion attachment to host cell"/>
    <property type="evidence" value="ECO:0007669"/>
    <property type="project" value="UniProtKB-KW"/>
</dbReference>
<dbReference type="InterPro" id="IPR055447">
    <property type="entry name" value="Rhabdo_glycop_CD"/>
</dbReference>
<dbReference type="InterPro" id="IPR001903">
    <property type="entry name" value="Rhabdo_glycop_FD"/>
</dbReference>
<dbReference type="InterPro" id="IPR002417">
    <property type="entry name" value="Spike_prot"/>
</dbReference>
<dbReference type="Pfam" id="PF24833">
    <property type="entry name" value="Rhabdo_glycop_CD"/>
    <property type="match status" value="1"/>
</dbReference>
<dbReference type="Pfam" id="PF00974">
    <property type="entry name" value="Rhabdo_glycop_FD"/>
    <property type="match status" value="1"/>
</dbReference>
<dbReference type="PRINTS" id="PR00796">
    <property type="entry name" value="SPIKEPROTEIN"/>
</dbReference>
<dbReference type="SUPFAM" id="SSF161008">
    <property type="entry name" value="Viral glycoprotein ectodomain-like"/>
    <property type="match status" value="1"/>
</dbReference>
<comment type="function">
    <text evidence="1">Binds to specific receptor at cellular surface, bringing about the attachment of the virus particle to the cell. Plays a major role in the determination of host range restriction and virulence. Class I viral fusion protein. Responsible for penetration of the viral nucleocapsid into the cell cytoplasm by mediating the fusion of the membrane of the endocytosed virus particle with the endosomal membrane. Low pH in endosomes induce an irreversible conformational change in G, releasing a fusion hydrophobic peptide (By similarity).</text>
</comment>
<comment type="subunit">
    <text evidence="1">Homotrimer.</text>
</comment>
<comment type="subcellular location">
    <subcellularLocation>
        <location evidence="1">Virion membrane</location>
        <topology evidence="1">Single-pass type I membrane protein</topology>
    </subcellularLocation>
</comment>
<comment type="similarity">
    <text evidence="3">Belongs to the novirhabdovirus glycoprotein family.</text>
</comment>
<feature type="signal peptide" evidence="2">
    <location>
        <begin position="1"/>
        <end position="20"/>
    </location>
</feature>
<feature type="chain" id="PRO_0000282899" description="Glycoprotein">
    <location>
        <begin position="21"/>
        <end position="508"/>
    </location>
</feature>
<feature type="topological domain" description="Virion surface" evidence="2">
    <location>
        <begin position="21"/>
        <end position="461"/>
    </location>
</feature>
<feature type="transmembrane region" description="Helical" evidence="2">
    <location>
        <begin position="462"/>
        <end position="482"/>
    </location>
</feature>
<feature type="topological domain" description="Intravirion" evidence="2">
    <location>
        <begin position="483"/>
        <end position="508"/>
    </location>
</feature>
<feature type="glycosylation site" description="N-linked (GlcNAc...) asparagine; by host" evidence="2">
    <location>
        <position position="56"/>
    </location>
</feature>
<feature type="glycosylation site" description="N-linked (GlcNAc...) asparagine; by host" evidence="2">
    <location>
        <position position="400"/>
    </location>
</feature>
<feature type="glycosylation site" description="N-linked (GlcNAc...) asparagine; by host" evidence="2">
    <location>
        <position position="401"/>
    </location>
</feature>
<feature type="glycosylation site" description="N-linked (GlcNAc...) asparagine; by host" evidence="2">
    <location>
        <position position="438"/>
    </location>
</feature>
<keyword id="KW-0325">Glycoprotein</keyword>
<keyword id="KW-0945">Host-virus interaction</keyword>
<keyword id="KW-0472">Membrane</keyword>
<keyword id="KW-0732">Signal</keyword>
<keyword id="KW-0812">Transmembrane</keyword>
<keyword id="KW-1133">Transmembrane helix</keyword>
<keyword id="KW-1161">Viral attachment to host cell</keyword>
<keyword id="KW-0261">Viral envelope protein</keyword>
<keyword id="KW-0946">Virion</keyword>
<keyword id="KW-1160">Virus entry into host cell</keyword>
<reference key="1">
    <citation type="journal article" date="1996" name="J. Gen. Virol.">
        <title>Identification of the non-virion (NV) protein of fish rhabdoviruses viral haemorrhagic septicaemia virus and infectious haematopoietic necrosis virus.</title>
        <authorList>
            <person name="Schutze H."/>
            <person name="Enzmann P.J."/>
            <person name="Mundt E."/>
            <person name="Mettenleiter T.C."/>
        </authorList>
    </citation>
    <scope>NUCLEOTIDE SEQUENCE [GENOMIC RNA]</scope>
</reference>
<reference key="2">
    <citation type="journal article" date="1995" name="J. Gen. Virol.">
        <title>Complete genomic sequence of the fish rhabdovirus infectious haematopoietic necrosis virus.</title>
        <authorList>
            <person name="Schutze H."/>
            <person name="Enzmann P.J."/>
            <person name="Kuchling R."/>
            <person name="Mundt E."/>
            <person name="Niemann H."/>
            <person name="Mettenleiter T.C."/>
        </authorList>
    </citation>
    <scope>NUCLEOTIDE SEQUENCE [GENOMIC RNA]</scope>
</reference>
<protein>
    <recommendedName>
        <fullName>Glycoprotein</fullName>
    </recommendedName>
    <alternativeName>
        <fullName>Spike glycoprotein</fullName>
    </alternativeName>
</protein>
<gene>
    <name type="primary">G</name>
</gene>
<sequence length="508" mass="56629">MDTTITTPLILILITCGANSQTVKPDTASESDQPTWSNPLFTYPEGCTLDKLSKVNASQLRCPRIFDDENRGLIAYPTSIRSLSVGNDLGDIHTQGNHIHKVLYRTICSTGFFGGQTIEKALVEMKLSTKEAGAYDTTTAAALYFPAPRCQWYTDNVQNDLIFYYTTQKSVLRDPYTRDFLDSDFIGGKCTKSPCQTHWSNVVWMGDAGIPACDSSQEIKGHLFVDKISNRVVKATSYGHHPWGLHQACMIEFCGKQWIRTDLGDLISVEYNSGAEILSFPKCEDKTVGMRGNLDDFAYLDDLVKASESREECLEAHAEIISTNSVTPYLLSKFRSPHPGINDVYAMHKGSIYHGMCMTVAVDEVSKDRTTYRAHRATSFTKWERPFGDEWEGFHGLHGNNTTIIPDLEKYVAQYKTSMMEPMSIKSVPHPSILALYNETDVSGISIRKLDSFDLQSLHWSFWPTISALGGIPFALLLAVAACCCWSGRPPTPSASQSIPMYHLANRS</sequence>
<evidence type="ECO:0000250" key="1"/>
<evidence type="ECO:0000255" key="2"/>
<evidence type="ECO:0000305" key="3"/>
<organism>
    <name type="scientific">Infectious hematopoietic necrosis virus (strain Oregon69)</name>
    <name type="common">IHNV</name>
    <dbReference type="NCBI Taxonomy" id="429315"/>
    <lineage>
        <taxon>Viruses</taxon>
        <taxon>Riboviria</taxon>
        <taxon>Orthornavirae</taxon>
        <taxon>Negarnaviricota</taxon>
        <taxon>Haploviricotina</taxon>
        <taxon>Monjiviricetes</taxon>
        <taxon>Mononegavirales</taxon>
        <taxon>Rhabdoviridae</taxon>
        <taxon>Gammarhabdovirinae</taxon>
        <taxon>Novirhabdovirus</taxon>
        <taxon>Novirhabdovirus salmonid</taxon>
    </lineage>
</organism>